<comment type="function">
    <text evidence="3">AMP/ATP-binding subunit of AMP-activated protein kinase (AMPK), an energy sensor protein kinase that plays a key role in regulating cellular energy metabolism. In response to reduction of intracellular ATP levels, AMPK activates energy-producing pathways and inhibits energy-consuming processes: inhibits protein, carbohydrate and lipid biosynthesis, as well as cell growth and proliferation. AMPK acts via direct phosphorylation of metabolic enzymes, and by longer-term effects via phosphorylation of transcription regulators. Also acts as a regulator of cellular polarity by remodeling the actin cytoskeleton; probably by indirectly activating myosin. Gamma non-catalytic subunit mediates binding to AMP, ADP and ATP, leading to activate or inhibit AMPK: AMP-binding results in allosteric activation of alpha catalytic subunit (PRKAA1 or PRKAA2) both by inducing phosphorylation and preventing dephosphorylation of catalytic subunits. ADP also stimulates phosphorylation, without stimulating already phosphorylated catalytic subunit. ATP promotes dephosphorylation of catalytic subunit, rendering the AMPK enzyme inactive.</text>
</comment>
<comment type="subunit">
    <text evidence="1">AMPK is a heterotrimer of an alpha catalytic subunit (PRKAA1 or PRKAA2), a beta (PRKAB1 or PRKAB2) and a gamma non-catalytic subunits (PRKAG1, PRKAG2 or PRKAG3). Interacts with FNIP1 and FNIP2 (By similarity).</text>
</comment>
<comment type="alternative products">
    <event type="alternative splicing"/>
    <isoform>
        <id>Q91WG5-1</id>
        <name>A</name>
        <sequence type="displayed"/>
    </isoform>
    <isoform>
        <id>Q91WG5-2</id>
        <name>B</name>
        <sequence type="described" ref="VSP_015586"/>
    </isoform>
</comment>
<comment type="domain">
    <text evidence="1">The AMPK pseudosubstrate motif resembles the sequence around sites phosphorylated on target proteins of AMPK, except the presence of a non-phosphorylatable residue in place of Ser. In the absence of AMP this pseudosubstrate sequence may bind to the active site groove on the alpha subunit (PRKAA1 or PRKAA2), preventing phosphorylation by the upstream activating kinase STK11/LKB1 (By similarity).</text>
</comment>
<comment type="domain">
    <text evidence="2">The 4 CBS domains mediate binding to nucleotides. Of the 4 potential nucleotide-binding sites, 3 are occupied, designated as sites 1, 3, and 4 based on the CBS modules that provide the acidic residue for coordination with the 2'- and 3'-hydroxyl groups of the ribose of AMP. Of these, site 4 appears to be a structural site that retains a tightly held AMP molecule (AMP 3). The 2 remaining sites, 1 and 3, can bind either AMP, ADP or ATP. Site 1 (AMP, ADP or ATP 1) is the high-affinity binding site and likely accommodates AMP or ADP. Site 3 (AMP, ADP or ATP 2) is the weakest nucleotide-binding site on the gamma subunit, yet it is exquisitely sensitive to changes in nucleotide levels and this allows AMPK to respond rapidly to changes in cellular energy status. Site 3 is likely to be responsible for protection of a conserved threonine in the activation loop of the alpha catalytic subunit through conformational changes induced by binding of AMP or ADP.</text>
</comment>
<comment type="PTM">
    <text evidence="6">Phosphorylated by ULK1; leading to negatively regulate AMPK activity and suggesting the existence of a regulatory feedback loop between ULK1 and AMPK.</text>
</comment>
<comment type="PTM">
    <text evidence="3">Glycosylated; O-GlcNAcylated by OGT, promoting the AMP-activated protein kinase (AMPK) activity.</text>
</comment>
<comment type="similarity">
    <text evidence="8">Belongs to the 5'-AMP-activated protein kinase gamma subunit family.</text>
</comment>
<name>AAKG2_MOUSE</name>
<proteinExistence type="evidence at protein level"/>
<organism>
    <name type="scientific">Mus musculus</name>
    <name type="common">Mouse</name>
    <dbReference type="NCBI Taxonomy" id="10090"/>
    <lineage>
        <taxon>Eukaryota</taxon>
        <taxon>Metazoa</taxon>
        <taxon>Chordata</taxon>
        <taxon>Craniata</taxon>
        <taxon>Vertebrata</taxon>
        <taxon>Euteleostomi</taxon>
        <taxon>Mammalia</taxon>
        <taxon>Eutheria</taxon>
        <taxon>Euarchontoglires</taxon>
        <taxon>Glires</taxon>
        <taxon>Rodentia</taxon>
        <taxon>Myomorpha</taxon>
        <taxon>Muroidea</taxon>
        <taxon>Muridae</taxon>
        <taxon>Murinae</taxon>
        <taxon>Mus</taxon>
        <taxon>Mus</taxon>
    </lineage>
</organism>
<gene>
    <name type="primary">Prkag2</name>
</gene>
<feature type="chain" id="PRO_0000204382" description="5'-AMP-activated protein kinase subunit gamma-2">
    <location>
        <begin position="1"/>
        <end position="566"/>
    </location>
</feature>
<feature type="domain" description="CBS 1" evidence="4">
    <location>
        <begin position="272"/>
        <end position="332"/>
    </location>
</feature>
<feature type="domain" description="CBS 2" evidence="4">
    <location>
        <begin position="354"/>
        <end position="412"/>
    </location>
</feature>
<feature type="domain" description="CBS 3" evidence="4">
    <location>
        <begin position="427"/>
        <end position="489"/>
    </location>
</feature>
<feature type="domain" description="CBS 4" evidence="4">
    <location>
        <begin position="501"/>
        <end position="559"/>
    </location>
</feature>
<feature type="region of interest" description="Disordered" evidence="5">
    <location>
        <begin position="1"/>
        <end position="198"/>
    </location>
</feature>
<feature type="short sequence motif" description="AMPK pseudosubstrate">
    <location>
        <begin position="367"/>
        <end position="388"/>
    </location>
</feature>
<feature type="compositionally biased region" description="Low complexity" evidence="5">
    <location>
        <begin position="15"/>
        <end position="25"/>
    </location>
</feature>
<feature type="compositionally biased region" description="Basic and acidic residues" evidence="5">
    <location>
        <begin position="54"/>
        <end position="64"/>
    </location>
</feature>
<feature type="compositionally biased region" description="Low complexity" evidence="5">
    <location>
        <begin position="132"/>
        <end position="144"/>
    </location>
</feature>
<feature type="compositionally biased region" description="Low complexity" evidence="5">
    <location>
        <begin position="156"/>
        <end position="172"/>
    </location>
</feature>
<feature type="compositionally biased region" description="Basic and acidic residues" evidence="5">
    <location>
        <begin position="180"/>
        <end position="189"/>
    </location>
</feature>
<feature type="binding site" evidence="2">
    <location>
        <position position="299"/>
    </location>
    <ligand>
        <name>ADP</name>
        <dbReference type="ChEBI" id="CHEBI:456216"/>
        <label>2</label>
    </ligand>
</feature>
<feature type="binding site" evidence="2">
    <location>
        <position position="299"/>
    </location>
    <ligand>
        <name>AMP</name>
        <dbReference type="ChEBI" id="CHEBI:456215"/>
        <label>2</label>
    </ligand>
</feature>
<feature type="binding site" evidence="2">
    <location>
        <position position="299"/>
    </location>
    <ligand>
        <name>ATP</name>
        <dbReference type="ChEBI" id="CHEBI:30616"/>
        <label>1</label>
    </ligand>
</feature>
<feature type="binding site" evidence="2">
    <location>
        <position position="299"/>
    </location>
    <ligand>
        <name>ATP</name>
        <dbReference type="ChEBI" id="CHEBI:30616"/>
        <label>2</label>
    </ligand>
</feature>
<feature type="binding site" evidence="2">
    <location>
        <begin position="314"/>
        <end position="319"/>
    </location>
    <ligand>
        <name>ADP</name>
        <dbReference type="ChEBI" id="CHEBI:456216"/>
        <label>1</label>
    </ligand>
</feature>
<feature type="binding site" evidence="2">
    <location>
        <begin position="314"/>
        <end position="319"/>
    </location>
    <ligand>
        <name>AMP</name>
        <dbReference type="ChEBI" id="CHEBI:456215"/>
        <label>1</label>
    </ligand>
</feature>
<feature type="binding site" evidence="2">
    <location>
        <begin position="314"/>
        <end position="319"/>
    </location>
    <ligand>
        <name>ATP</name>
        <dbReference type="ChEBI" id="CHEBI:30616"/>
        <label>1</label>
    </ligand>
</feature>
<feature type="binding site" evidence="2">
    <location>
        <position position="359"/>
    </location>
    <ligand>
        <name>ADP</name>
        <dbReference type="ChEBI" id="CHEBI:456216"/>
        <label>1</label>
    </ligand>
</feature>
<feature type="binding site" evidence="2">
    <location>
        <position position="359"/>
    </location>
    <ligand>
        <name>AMP</name>
        <dbReference type="ChEBI" id="CHEBI:456215"/>
        <label>1</label>
    </ligand>
</feature>
<feature type="binding site" evidence="2">
    <location>
        <position position="359"/>
    </location>
    <ligand>
        <name>ATP</name>
        <dbReference type="ChEBI" id="CHEBI:30616"/>
        <label>1</label>
    </ligand>
</feature>
<feature type="binding site" evidence="2">
    <location>
        <begin position="380"/>
        <end position="381"/>
    </location>
    <ligand>
        <name>ADP</name>
        <dbReference type="ChEBI" id="CHEBI:456216"/>
        <label>1</label>
    </ligand>
</feature>
<feature type="binding site" evidence="2">
    <location>
        <begin position="380"/>
        <end position="381"/>
    </location>
    <ligand>
        <name>AMP</name>
        <dbReference type="ChEBI" id="CHEBI:456215"/>
        <label>1</label>
    </ligand>
</feature>
<feature type="binding site" evidence="2">
    <location>
        <begin position="380"/>
        <end position="381"/>
    </location>
    <ligand>
        <name>ATP</name>
        <dbReference type="ChEBI" id="CHEBI:30616"/>
        <label>1</label>
    </ligand>
</feature>
<feature type="binding site" evidence="2">
    <location>
        <position position="380"/>
    </location>
    <ligand>
        <name>AMP</name>
        <dbReference type="ChEBI" id="CHEBI:456215"/>
        <label>3</label>
    </ligand>
</feature>
<feature type="binding site" evidence="2">
    <location>
        <position position="381"/>
    </location>
    <ligand>
        <name>ATP</name>
        <dbReference type="ChEBI" id="CHEBI:30616"/>
        <label>2</label>
    </ligand>
</feature>
<feature type="binding site" evidence="2">
    <location>
        <position position="399"/>
    </location>
    <ligand>
        <name>ADP</name>
        <dbReference type="ChEBI" id="CHEBI:456216"/>
        <label>2</label>
    </ligand>
</feature>
<feature type="binding site" evidence="2">
    <location>
        <position position="399"/>
    </location>
    <ligand>
        <name>AMP</name>
        <dbReference type="ChEBI" id="CHEBI:456215"/>
        <label>2</label>
    </ligand>
</feature>
<feature type="binding site" evidence="2">
    <location>
        <position position="399"/>
    </location>
    <ligand>
        <name>ATP</name>
        <dbReference type="ChEBI" id="CHEBI:30616"/>
        <label>2</label>
    </ligand>
</feature>
<feature type="binding site" evidence="2">
    <location>
        <position position="429"/>
    </location>
    <ligand>
        <name>AMP</name>
        <dbReference type="ChEBI" id="CHEBI:456215"/>
        <label>3</label>
    </ligand>
</feature>
<feature type="binding site" evidence="2">
    <location>
        <position position="434"/>
    </location>
    <ligand>
        <name>AMP</name>
        <dbReference type="ChEBI" id="CHEBI:456215"/>
        <label>3</label>
    </ligand>
</feature>
<feature type="binding site" evidence="2">
    <location>
        <begin position="455"/>
        <end position="456"/>
    </location>
    <ligand>
        <name>AMP</name>
        <dbReference type="ChEBI" id="CHEBI:456215"/>
        <label>3</label>
    </ligand>
</feature>
<feature type="binding site" evidence="2">
    <location>
        <begin position="471"/>
        <end position="474"/>
    </location>
    <ligand>
        <name>ADP</name>
        <dbReference type="ChEBI" id="CHEBI:456216"/>
        <label>2</label>
    </ligand>
</feature>
<feature type="binding site" evidence="2">
    <location>
        <begin position="471"/>
        <end position="474"/>
    </location>
    <ligand>
        <name>AMP</name>
        <dbReference type="ChEBI" id="CHEBI:456215"/>
        <label>2</label>
    </ligand>
</feature>
<feature type="binding site" evidence="2">
    <location>
        <begin position="471"/>
        <end position="474"/>
    </location>
    <ligand>
        <name>ATP</name>
        <dbReference type="ChEBI" id="CHEBI:30616"/>
        <label>2</label>
    </ligand>
</feature>
<feature type="binding site" evidence="2">
    <location>
        <position position="498"/>
    </location>
    <ligand>
        <name>ADP</name>
        <dbReference type="ChEBI" id="CHEBI:456216"/>
        <label>2</label>
    </ligand>
</feature>
<feature type="binding site" evidence="2">
    <location>
        <position position="498"/>
    </location>
    <ligand>
        <name>AMP</name>
        <dbReference type="ChEBI" id="CHEBI:456215"/>
        <label>2</label>
    </ligand>
</feature>
<feature type="binding site" evidence="2">
    <location>
        <position position="498"/>
    </location>
    <ligand>
        <name>ATP</name>
        <dbReference type="ChEBI" id="CHEBI:30616"/>
        <label>2</label>
    </ligand>
</feature>
<feature type="binding site" evidence="2">
    <location>
        <begin position="527"/>
        <end position="528"/>
    </location>
    <ligand>
        <name>ADP</name>
        <dbReference type="ChEBI" id="CHEBI:456216"/>
        <label>2</label>
    </ligand>
</feature>
<feature type="binding site" evidence="2">
    <location>
        <begin position="527"/>
        <end position="528"/>
    </location>
    <ligand>
        <name>AMP</name>
        <dbReference type="ChEBI" id="CHEBI:456215"/>
        <label>2</label>
    </ligand>
</feature>
<feature type="binding site" evidence="2">
    <location>
        <begin position="527"/>
        <end position="528"/>
    </location>
    <ligand>
        <name>ATP</name>
        <dbReference type="ChEBI" id="CHEBI:30616"/>
        <label>2</label>
    </ligand>
</feature>
<feature type="binding site" evidence="2">
    <location>
        <position position="527"/>
    </location>
    <ligand>
        <name>AMP</name>
        <dbReference type="ChEBI" id="CHEBI:456215"/>
        <label>3</label>
    </ligand>
</feature>
<feature type="binding site" evidence="2">
    <location>
        <begin position="543"/>
        <end position="546"/>
    </location>
    <ligand>
        <name>AMP</name>
        <dbReference type="ChEBI" id="CHEBI:456215"/>
        <label>3</label>
    </ligand>
</feature>
<feature type="modified residue" description="Phosphoserine" evidence="9 10">
    <location>
        <position position="65"/>
    </location>
</feature>
<feature type="modified residue" description="Phosphoserine" evidence="9 10">
    <location>
        <position position="71"/>
    </location>
</feature>
<feature type="modified residue" description="Phosphoserine" evidence="9">
    <location>
        <position position="73"/>
    </location>
</feature>
<feature type="modified residue" description="Phosphoserine" evidence="9">
    <location>
        <position position="90"/>
    </location>
</feature>
<feature type="modified residue" description="Phosphoserine" evidence="9">
    <location>
        <position position="138"/>
    </location>
</feature>
<feature type="modified residue" description="Phosphoserine" evidence="9 10">
    <location>
        <position position="143"/>
    </location>
</feature>
<feature type="modified residue" description="Phosphoserine" evidence="9">
    <location>
        <position position="158"/>
    </location>
</feature>
<feature type="modified residue" description="Phosphoserine" evidence="9 10">
    <location>
        <position position="161"/>
    </location>
</feature>
<feature type="modified residue" description="Phosphoserine" evidence="10">
    <location>
        <position position="162"/>
    </location>
</feature>
<feature type="modified residue" description="Phosphothreonine" evidence="10">
    <location>
        <position position="165"/>
    </location>
</feature>
<feature type="modified residue" description="Phosphoserine" evidence="9">
    <location>
        <position position="196"/>
    </location>
</feature>
<feature type="splice variant" id="VSP_015586" description="In isoform B." evidence="7">
    <location>
        <begin position="1"/>
        <end position="240"/>
    </location>
</feature>
<feature type="sequence conflict" description="In Ref. 3; AAH15283." evidence="8" ref="3">
    <original>V</original>
    <variation>F</variation>
    <location>
        <position position="257"/>
    </location>
</feature>
<feature type="sequence conflict" description="In Ref. 1; AAQ55224." evidence="8" ref="1">
    <original>T</original>
    <variation>N</variation>
    <location>
        <position position="516"/>
    </location>
</feature>
<evidence type="ECO:0000250" key="1"/>
<evidence type="ECO:0000250" key="2">
    <source>
        <dbReference type="UniProtKB" id="P80385"/>
    </source>
</evidence>
<evidence type="ECO:0000250" key="3">
    <source>
        <dbReference type="UniProtKB" id="Q9UGJ0"/>
    </source>
</evidence>
<evidence type="ECO:0000255" key="4">
    <source>
        <dbReference type="PROSITE-ProRule" id="PRU00703"/>
    </source>
</evidence>
<evidence type="ECO:0000256" key="5">
    <source>
        <dbReference type="SAM" id="MobiDB-lite"/>
    </source>
</evidence>
<evidence type="ECO:0000269" key="6">
    <source>
    </source>
</evidence>
<evidence type="ECO:0000303" key="7">
    <source ref="1"/>
</evidence>
<evidence type="ECO:0000305" key="8"/>
<evidence type="ECO:0007744" key="9">
    <source>
    </source>
</evidence>
<evidence type="ECO:0007744" key="10">
    <source>
    </source>
</evidence>
<keyword id="KW-0025">Alternative splicing</keyword>
<keyword id="KW-0067">ATP-binding</keyword>
<keyword id="KW-0129">CBS domain</keyword>
<keyword id="KW-0275">Fatty acid biosynthesis</keyword>
<keyword id="KW-0276">Fatty acid metabolism</keyword>
<keyword id="KW-0325">Glycoprotein</keyword>
<keyword id="KW-0444">Lipid biosynthesis</keyword>
<keyword id="KW-0443">Lipid metabolism</keyword>
<keyword id="KW-0547">Nucleotide-binding</keyword>
<keyword id="KW-0597">Phosphoprotein</keyword>
<keyword id="KW-1185">Reference proteome</keyword>
<keyword id="KW-0677">Repeat</keyword>
<sequence>MGSAAMDTKKKKEVSSPGGSSGKKNPSLKRRSLRVHIPDLSSFAMPLLDGDVENSEKHSSRKVDSPFSSGSPSRGLFSRGPQPRPSSPVSAPVRPKTSPGSPKTVFPFSYQESPPRSPRRMSFSGIFRSSSKESSPNSNPSTSPGGIRFFSRSRKTSSVSSSPSTPTQVTKQHPFPLESYKQEPERPESRIYASSSPPDTGQRFCLAFQSPARPPLASPTYHAPLRTAVLAAAPGPAEAGMLEKLEFQEEEDSESGVYMRFMRSHKCYDIVPTSSKLVVFDTTLQVKKAFFALVANGVRAAPLWESKKQSFVGMLTITDFINILHRYYKSPMVQIYELEEHKIETWRELYLQETFKPLVNISPDASLFDAVYSLIKNKIHRLPVIDPISGNALYILTHKRILKFLQLFMSDMPKPAFMKQNLDELGIGTYHNIAFIHPDTPIIKALNIFVERRISALPVVDESGKVVDIYSKFDVINLAAEKTYNNLDITVTQALQHRSQYFEGVVKCSKLETLETIVDRIVRAEVHRLVVVNEADSIVGIISLSDILQALILTPAGAKQKETETE</sequence>
<reference key="1">
    <citation type="submission" date="2003-07" db="EMBL/GenBank/DDBJ databases">
        <title>Cloning of mouse protein kinase, AMP-activated, gamma 2 non-catalytic subunit.</title>
        <authorList>
            <person name="Zhou G."/>
            <person name="Jiang D."/>
            <person name="Zhang Y."/>
        </authorList>
    </citation>
    <scope>NUCLEOTIDE SEQUENCE [MRNA] (ISOFORM B)</scope>
    <source>
        <strain>C57BL/6J</strain>
    </source>
</reference>
<reference key="2">
    <citation type="journal article" date="2009" name="PLoS Biol.">
        <title>Lineage-specific biology revealed by a finished genome assembly of the mouse.</title>
        <authorList>
            <person name="Church D.M."/>
            <person name="Goodstadt L."/>
            <person name="Hillier L.W."/>
            <person name="Zody M.C."/>
            <person name="Goldstein S."/>
            <person name="She X."/>
            <person name="Bult C.J."/>
            <person name="Agarwala R."/>
            <person name="Cherry J.L."/>
            <person name="DiCuccio M."/>
            <person name="Hlavina W."/>
            <person name="Kapustin Y."/>
            <person name="Meric P."/>
            <person name="Maglott D."/>
            <person name="Birtle Z."/>
            <person name="Marques A.C."/>
            <person name="Graves T."/>
            <person name="Zhou S."/>
            <person name="Teague B."/>
            <person name="Potamousis K."/>
            <person name="Churas C."/>
            <person name="Place M."/>
            <person name="Herschleb J."/>
            <person name="Runnheim R."/>
            <person name="Forrest D."/>
            <person name="Amos-Landgraf J."/>
            <person name="Schwartz D.C."/>
            <person name="Cheng Z."/>
            <person name="Lindblad-Toh K."/>
            <person name="Eichler E.E."/>
            <person name="Ponting C.P."/>
        </authorList>
    </citation>
    <scope>NUCLEOTIDE SEQUENCE [LARGE SCALE GENOMIC DNA]</scope>
    <source>
        <strain>C57BL/6J</strain>
    </source>
</reference>
<reference key="3">
    <citation type="journal article" date="2004" name="Genome Res.">
        <title>The status, quality, and expansion of the NIH full-length cDNA project: the Mammalian Gene Collection (MGC).</title>
        <authorList>
            <consortium name="The MGC Project Team"/>
        </authorList>
    </citation>
    <scope>NUCLEOTIDE SEQUENCE [LARGE SCALE MRNA] (ISOFORM A)</scope>
    <source>
        <strain>FVB/N</strain>
        <tissue>Kidney</tissue>
    </source>
</reference>
<reference key="4">
    <citation type="journal article" date="2007" name="Proc. Natl. Acad. Sci. U.S.A.">
        <title>Large-scale phosphorylation analysis of mouse liver.</title>
        <authorList>
            <person name="Villen J."/>
            <person name="Beausoleil S.A."/>
            <person name="Gerber S.A."/>
            <person name="Gygi S.P."/>
        </authorList>
    </citation>
    <scope>PHOSPHORYLATION [LARGE SCALE ANALYSIS] AT SER-65; SER-71; SER-73; SER-90; SER-138; SER-143; SER-158; SER-161 AND SER-196</scope>
    <scope>IDENTIFICATION BY MASS SPECTROMETRY [LARGE SCALE ANALYSIS]</scope>
    <source>
        <tissue>Liver</tissue>
    </source>
</reference>
<reference key="5">
    <citation type="journal article" date="2010" name="Cell">
        <title>A tissue-specific atlas of mouse protein phosphorylation and expression.</title>
        <authorList>
            <person name="Huttlin E.L."/>
            <person name="Jedrychowski M.P."/>
            <person name="Elias J.E."/>
            <person name="Goswami T."/>
            <person name="Rad R."/>
            <person name="Beausoleil S.A."/>
            <person name="Villen J."/>
            <person name="Haas W."/>
            <person name="Sowa M.E."/>
            <person name="Gygi S.P."/>
        </authorList>
    </citation>
    <scope>PHOSPHORYLATION [LARGE SCALE ANALYSIS] AT SER-65; SER-71; SER-143; SER-161; SER-162 AND THR-165</scope>
    <scope>IDENTIFICATION BY MASS SPECTROMETRY [LARGE SCALE ANALYSIS]</scope>
    <source>
        <tissue>Brain</tissue>
        <tissue>Brown adipose tissue</tissue>
        <tissue>Heart</tissue>
        <tissue>Kidney</tissue>
        <tissue>Liver</tissue>
        <tissue>Pancreas</tissue>
        <tissue>Testis</tissue>
    </source>
</reference>
<reference key="6">
    <citation type="journal article" date="2011" name="Autophagy">
        <title>Ulk1-mediated phosphorylation of AMPK constitutes a negative regulatory feedback loop.</title>
        <authorList>
            <person name="Loffler A.S."/>
            <person name="Alers S."/>
            <person name="Dieterle A.M."/>
            <person name="Keppeler H."/>
            <person name="Franz-Wachtel M."/>
            <person name="Kundu M."/>
            <person name="Campbell D.G."/>
            <person name="Wesselborg S."/>
            <person name="Alessi D.R."/>
            <person name="Stork B."/>
        </authorList>
    </citation>
    <scope>PHOSPHORYLATION BY ULK1</scope>
</reference>
<accession>Q91WG5</accession>
<accession>E9QK80</accession>
<accession>Q6V7V5</accession>
<dbReference type="EMBL" id="AY348864">
    <property type="protein sequence ID" value="AAQ55224.1"/>
    <property type="molecule type" value="mRNA"/>
</dbReference>
<dbReference type="EMBL" id="AC116151">
    <property type="status" value="NOT_ANNOTATED_CDS"/>
    <property type="molecule type" value="Genomic_DNA"/>
</dbReference>
<dbReference type="EMBL" id="AC125270">
    <property type="status" value="NOT_ANNOTATED_CDS"/>
    <property type="molecule type" value="Genomic_DNA"/>
</dbReference>
<dbReference type="EMBL" id="BC015283">
    <property type="protein sequence ID" value="AAH15283.1"/>
    <property type="molecule type" value="mRNA"/>
</dbReference>
<dbReference type="CCDS" id="CCDS19130.1">
    <molecule id="Q91WG5-1"/>
</dbReference>
<dbReference type="CCDS" id="CCDS51437.1">
    <molecule id="Q91WG5-2"/>
</dbReference>
<dbReference type="RefSeq" id="NP_001164027.1">
    <molecule id="Q91WG5-2"/>
    <property type="nucleotide sequence ID" value="NM_001170556.1"/>
</dbReference>
<dbReference type="RefSeq" id="NP_663376.2">
    <molecule id="Q91WG5-1"/>
    <property type="nucleotide sequence ID" value="NM_145401.2"/>
</dbReference>
<dbReference type="SMR" id="Q91WG5"/>
<dbReference type="BioGRID" id="223832">
    <property type="interactions" value="10"/>
</dbReference>
<dbReference type="ComplexPortal" id="CPX-5849">
    <property type="entry name" value="AMPK complex, alpha1-beta1-gamma2 variant"/>
</dbReference>
<dbReference type="ComplexPortal" id="CPX-5858">
    <property type="entry name" value="AMPK complex, alpha2-beta1-gamma2 variant"/>
</dbReference>
<dbReference type="ComplexPortal" id="CPX-5859">
    <property type="entry name" value="AMPK complex, alpha2-beta2-gamma2 variant"/>
</dbReference>
<dbReference type="ComplexPortal" id="CPX-5860">
    <property type="entry name" value="AMPK complex, alpha1-beta2-gamma2 variant"/>
</dbReference>
<dbReference type="FunCoup" id="Q91WG5">
    <property type="interactions" value="1546"/>
</dbReference>
<dbReference type="IntAct" id="Q91WG5">
    <property type="interactions" value="1"/>
</dbReference>
<dbReference type="STRING" id="10090.ENSMUSP00000030784"/>
<dbReference type="BindingDB" id="Q91WG5"/>
<dbReference type="ChEMBL" id="CHEMBL4524004"/>
<dbReference type="iPTMnet" id="Q91WG5"/>
<dbReference type="PhosphoSitePlus" id="Q91WG5"/>
<dbReference type="jPOST" id="Q91WG5"/>
<dbReference type="PaxDb" id="10090-ENSMUSP00000030784"/>
<dbReference type="ProteomicsDB" id="286012">
    <molecule id="Q91WG5-1"/>
</dbReference>
<dbReference type="ProteomicsDB" id="286013">
    <molecule id="Q91WG5-2"/>
</dbReference>
<dbReference type="Pumba" id="Q91WG5"/>
<dbReference type="Antibodypedia" id="1327">
    <property type="antibodies" value="156 antibodies from 31 providers"/>
</dbReference>
<dbReference type="DNASU" id="108099"/>
<dbReference type="Ensembl" id="ENSMUST00000030784.14">
    <molecule id="Q91WG5-1"/>
    <property type="protein sequence ID" value="ENSMUSP00000030784.8"/>
    <property type="gene ID" value="ENSMUSG00000028944.15"/>
</dbReference>
<dbReference type="Ensembl" id="ENSMUST00000114975.8">
    <molecule id="Q91WG5-2"/>
    <property type="protein sequence ID" value="ENSMUSP00000110626.2"/>
    <property type="gene ID" value="ENSMUSG00000028944.15"/>
</dbReference>
<dbReference type="GeneID" id="108099"/>
<dbReference type="KEGG" id="mmu:108099"/>
<dbReference type="UCSC" id="uc008wsk.2">
    <molecule id="Q91WG5-1"/>
    <property type="organism name" value="mouse"/>
</dbReference>
<dbReference type="AGR" id="MGI:1336153"/>
<dbReference type="CTD" id="51422"/>
<dbReference type="MGI" id="MGI:1336153">
    <property type="gene designation" value="Prkag2"/>
</dbReference>
<dbReference type="VEuPathDB" id="HostDB:ENSMUSG00000028944"/>
<dbReference type="eggNOG" id="KOG1764">
    <property type="taxonomic scope" value="Eukaryota"/>
</dbReference>
<dbReference type="GeneTree" id="ENSGT00950000183019"/>
<dbReference type="HOGENOM" id="CLU_021740_6_0_1"/>
<dbReference type="InParanoid" id="Q91WG5"/>
<dbReference type="OMA" id="XVQIYEL"/>
<dbReference type="OrthoDB" id="449052at2759"/>
<dbReference type="PhylomeDB" id="Q91WG5"/>
<dbReference type="TreeFam" id="TF313247"/>
<dbReference type="Reactome" id="R-MMU-1632852">
    <property type="pathway name" value="Macroautophagy"/>
</dbReference>
<dbReference type="Reactome" id="R-MMU-163680">
    <property type="pathway name" value="AMPK inhibits chREBP transcriptional activation activity"/>
</dbReference>
<dbReference type="Reactome" id="R-MMU-200425">
    <property type="pathway name" value="Carnitine shuttle"/>
</dbReference>
<dbReference type="Reactome" id="R-MMU-380972">
    <property type="pathway name" value="Energy dependent regulation of mTOR by LKB1-AMPK"/>
</dbReference>
<dbReference type="Reactome" id="R-MMU-5628897">
    <property type="pathway name" value="TP53 Regulates Metabolic Genes"/>
</dbReference>
<dbReference type="Reactome" id="R-MMU-6804756">
    <property type="pathway name" value="Regulation of TP53 Activity through Phosphorylation"/>
</dbReference>
<dbReference type="BioGRID-ORCS" id="108099">
    <property type="hits" value="4 hits in 81 CRISPR screens"/>
</dbReference>
<dbReference type="ChiTaRS" id="Prkag2">
    <property type="organism name" value="mouse"/>
</dbReference>
<dbReference type="PRO" id="PR:Q91WG5"/>
<dbReference type="Proteomes" id="UP000000589">
    <property type="component" value="Chromosome 5"/>
</dbReference>
<dbReference type="RNAct" id="Q91WG5">
    <property type="molecule type" value="protein"/>
</dbReference>
<dbReference type="Bgee" id="ENSMUSG00000028944">
    <property type="expression patterns" value="Expressed in seminiferous tubule of testis and 259 other cell types or tissues"/>
</dbReference>
<dbReference type="ExpressionAtlas" id="Q91WG5">
    <property type="expression patterns" value="baseline and differential"/>
</dbReference>
<dbReference type="GO" id="GO:0005829">
    <property type="term" value="C:cytosol"/>
    <property type="evidence" value="ECO:0000304"/>
    <property type="project" value="Reactome"/>
</dbReference>
<dbReference type="GO" id="GO:0005654">
    <property type="term" value="C:nucleoplasm"/>
    <property type="evidence" value="ECO:0000304"/>
    <property type="project" value="Reactome"/>
</dbReference>
<dbReference type="GO" id="GO:0031588">
    <property type="term" value="C:nucleotide-activated protein kinase complex"/>
    <property type="evidence" value="ECO:0000250"/>
    <property type="project" value="ComplexPortal"/>
</dbReference>
<dbReference type="GO" id="GO:0043531">
    <property type="term" value="F:ADP binding"/>
    <property type="evidence" value="ECO:0007669"/>
    <property type="project" value="Ensembl"/>
</dbReference>
<dbReference type="GO" id="GO:0016208">
    <property type="term" value="F:AMP binding"/>
    <property type="evidence" value="ECO:0007669"/>
    <property type="project" value="Ensembl"/>
</dbReference>
<dbReference type="GO" id="GO:0004679">
    <property type="term" value="F:AMP-activated protein kinase activity"/>
    <property type="evidence" value="ECO:0000304"/>
    <property type="project" value="MGI"/>
</dbReference>
<dbReference type="GO" id="GO:0005524">
    <property type="term" value="F:ATP binding"/>
    <property type="evidence" value="ECO:0007669"/>
    <property type="project" value="UniProtKB-KW"/>
</dbReference>
<dbReference type="GO" id="GO:0004862">
    <property type="term" value="F:cAMP-dependent protein kinase inhibitor activity"/>
    <property type="evidence" value="ECO:0007669"/>
    <property type="project" value="Ensembl"/>
</dbReference>
<dbReference type="GO" id="GO:0008607">
    <property type="term" value="F:phosphorylase kinase regulator activity"/>
    <property type="evidence" value="ECO:0007669"/>
    <property type="project" value="Ensembl"/>
</dbReference>
<dbReference type="GO" id="GO:0030295">
    <property type="term" value="F:protein kinase activator activity"/>
    <property type="evidence" value="ECO:0007669"/>
    <property type="project" value="Ensembl"/>
</dbReference>
<dbReference type="GO" id="GO:0019901">
    <property type="term" value="F:protein kinase binding"/>
    <property type="evidence" value="ECO:0007669"/>
    <property type="project" value="Ensembl"/>
</dbReference>
<dbReference type="GO" id="GO:0019887">
    <property type="term" value="F:protein kinase regulator activity"/>
    <property type="evidence" value="ECO:0000250"/>
    <property type="project" value="UniProtKB"/>
</dbReference>
<dbReference type="GO" id="GO:0031669">
    <property type="term" value="P:cellular response to nutrient levels"/>
    <property type="evidence" value="ECO:0000250"/>
    <property type="project" value="ComplexPortal"/>
</dbReference>
<dbReference type="GO" id="GO:0006633">
    <property type="term" value="P:fatty acid biosynthetic process"/>
    <property type="evidence" value="ECO:0007669"/>
    <property type="project" value="UniProtKB-KW"/>
</dbReference>
<dbReference type="GO" id="GO:0005977">
    <property type="term" value="P:glycogen metabolic process"/>
    <property type="evidence" value="ECO:0007669"/>
    <property type="project" value="Ensembl"/>
</dbReference>
<dbReference type="GO" id="GO:0035556">
    <property type="term" value="P:intracellular signal transduction"/>
    <property type="evidence" value="ECO:0007669"/>
    <property type="project" value="Ensembl"/>
</dbReference>
<dbReference type="GO" id="GO:0019217">
    <property type="term" value="P:regulation of fatty acid metabolic process"/>
    <property type="evidence" value="ECO:0007669"/>
    <property type="project" value="Ensembl"/>
</dbReference>
<dbReference type="GO" id="GO:0006110">
    <property type="term" value="P:regulation of glycolytic process"/>
    <property type="evidence" value="ECO:0007669"/>
    <property type="project" value="Ensembl"/>
</dbReference>
<dbReference type="CDD" id="cd04618">
    <property type="entry name" value="CBS_euAMPK_gamma-like_repeat1"/>
    <property type="match status" value="1"/>
</dbReference>
<dbReference type="CDD" id="cd04641">
    <property type="entry name" value="CBS_euAMPK_gamma-like_repeat2"/>
    <property type="match status" value="1"/>
</dbReference>
<dbReference type="FunFam" id="3.10.580.10:FF:000003">
    <property type="entry name" value="Protein kinase AMP-activated non-catalytic subunit gamma 1"/>
    <property type="match status" value="1"/>
</dbReference>
<dbReference type="FunFam" id="3.10.580.10:FF:000004">
    <property type="entry name" value="Protein kinase AMP-activated non-catalytic subunit gamma 2"/>
    <property type="match status" value="1"/>
</dbReference>
<dbReference type="Gene3D" id="3.10.580.10">
    <property type="entry name" value="CBS-domain"/>
    <property type="match status" value="2"/>
</dbReference>
<dbReference type="InterPro" id="IPR050511">
    <property type="entry name" value="AMPK_gamma/SDS23_families"/>
</dbReference>
<dbReference type="InterPro" id="IPR000644">
    <property type="entry name" value="CBS_dom"/>
</dbReference>
<dbReference type="InterPro" id="IPR046342">
    <property type="entry name" value="CBS_dom_sf"/>
</dbReference>
<dbReference type="PANTHER" id="PTHR13780:SF122">
    <property type="entry name" value="5'-AMP-ACTIVATED PROTEIN KINASE SUBUNIT GAMMA-2"/>
    <property type="match status" value="1"/>
</dbReference>
<dbReference type="PANTHER" id="PTHR13780">
    <property type="entry name" value="AMP-ACTIVATED PROTEIN KINASE, GAMMA REGULATORY SUBUNIT"/>
    <property type="match status" value="1"/>
</dbReference>
<dbReference type="Pfam" id="PF00571">
    <property type="entry name" value="CBS"/>
    <property type="match status" value="3"/>
</dbReference>
<dbReference type="SMART" id="SM00116">
    <property type="entry name" value="CBS"/>
    <property type="match status" value="4"/>
</dbReference>
<dbReference type="SUPFAM" id="SSF54631">
    <property type="entry name" value="CBS-domain pair"/>
    <property type="match status" value="2"/>
</dbReference>
<dbReference type="PROSITE" id="PS51371">
    <property type="entry name" value="CBS"/>
    <property type="match status" value="4"/>
</dbReference>
<protein>
    <recommendedName>
        <fullName>5'-AMP-activated protein kinase subunit gamma-2</fullName>
        <shortName>AMPK gamma2</shortName>
        <shortName>AMPK subunit gamma-2</shortName>
    </recommendedName>
</protein>